<reference key="1">
    <citation type="journal article" date="2006" name="Proc. Natl. Acad. Sci. U.S.A.">
        <title>Molecular genetic anatomy of inter- and intraserotype variation in the human bacterial pathogen group A Streptococcus.</title>
        <authorList>
            <person name="Beres S.B."/>
            <person name="Richter E.W."/>
            <person name="Nagiec M.J."/>
            <person name="Sumby P."/>
            <person name="Porcella S.F."/>
            <person name="DeLeo F.R."/>
            <person name="Musser J.M."/>
        </authorList>
    </citation>
    <scope>NUCLEOTIDE SEQUENCE [LARGE SCALE GENOMIC DNA]</scope>
    <source>
        <strain>MGAS2096</strain>
    </source>
</reference>
<sequence length="263" mass="28712">MSTSIKAIKESLEAVTSLLDPLFQELATDTRSGVQKALKSRQKAIQAELAEEERLEAMLSYEKALYKKGYQAIAGIDEVGRGPLAGPVVAACVILPKYCKIKGLNDSKKIPKSKHETIYQAVKEKALAIGIGIIDNQLIDEVNIYEATKLAMLEAIKQLESQLTQPDYLLIDAMTLDIAISQQSILKGDANSLSIAAASIVAKVTRDQMMANYDRIFPGYGFAKNAGYGTKEHLQGLKAYGITPIHRKSFEPVKSMCCDSTNP</sequence>
<accession>Q1JBP9</accession>
<keyword id="KW-0963">Cytoplasm</keyword>
<keyword id="KW-0255">Endonuclease</keyword>
<keyword id="KW-0378">Hydrolase</keyword>
<keyword id="KW-0464">Manganese</keyword>
<keyword id="KW-0479">Metal-binding</keyword>
<keyword id="KW-0540">Nuclease</keyword>
<protein>
    <recommendedName>
        <fullName evidence="1">Ribonuclease HII</fullName>
        <shortName evidence="1">RNase HII</shortName>
        <ecNumber evidence="1">3.1.26.4</ecNumber>
    </recommendedName>
</protein>
<organism>
    <name type="scientific">Streptococcus pyogenes serotype M12 (strain MGAS2096)</name>
    <dbReference type="NCBI Taxonomy" id="370553"/>
    <lineage>
        <taxon>Bacteria</taxon>
        <taxon>Bacillati</taxon>
        <taxon>Bacillota</taxon>
        <taxon>Bacilli</taxon>
        <taxon>Lactobacillales</taxon>
        <taxon>Streptococcaceae</taxon>
        <taxon>Streptococcus</taxon>
    </lineage>
</organism>
<comment type="function">
    <text evidence="1">Endonuclease that specifically degrades the RNA of RNA-DNA hybrids.</text>
</comment>
<comment type="catalytic activity">
    <reaction evidence="1">
        <text>Endonucleolytic cleavage to 5'-phosphomonoester.</text>
        <dbReference type="EC" id="3.1.26.4"/>
    </reaction>
</comment>
<comment type="cofactor">
    <cofactor evidence="1">
        <name>Mn(2+)</name>
        <dbReference type="ChEBI" id="CHEBI:29035"/>
    </cofactor>
    <cofactor evidence="1">
        <name>Mg(2+)</name>
        <dbReference type="ChEBI" id="CHEBI:18420"/>
    </cofactor>
    <text evidence="1">Manganese or magnesium. Binds 1 divalent metal ion per monomer in the absence of substrate. May bind a second metal ion after substrate binding.</text>
</comment>
<comment type="subcellular location">
    <subcellularLocation>
        <location evidence="1">Cytoplasm</location>
    </subcellularLocation>
</comment>
<comment type="similarity">
    <text evidence="1">Belongs to the RNase HII family.</text>
</comment>
<proteinExistence type="inferred from homology"/>
<name>RNH2_STRPB</name>
<dbReference type="EC" id="3.1.26.4" evidence="1"/>
<dbReference type="EMBL" id="CP000261">
    <property type="protein sequence ID" value="ABF36009.1"/>
    <property type="molecule type" value="Genomic_DNA"/>
</dbReference>
<dbReference type="SMR" id="Q1JBP9"/>
<dbReference type="KEGG" id="spj:MGAS2096_Spy0957"/>
<dbReference type="HOGENOM" id="CLU_036532_2_1_9"/>
<dbReference type="GO" id="GO:0005737">
    <property type="term" value="C:cytoplasm"/>
    <property type="evidence" value="ECO:0007669"/>
    <property type="project" value="UniProtKB-SubCell"/>
</dbReference>
<dbReference type="GO" id="GO:0032299">
    <property type="term" value="C:ribonuclease H2 complex"/>
    <property type="evidence" value="ECO:0007669"/>
    <property type="project" value="TreeGrafter"/>
</dbReference>
<dbReference type="GO" id="GO:0030145">
    <property type="term" value="F:manganese ion binding"/>
    <property type="evidence" value="ECO:0007669"/>
    <property type="project" value="UniProtKB-UniRule"/>
</dbReference>
<dbReference type="GO" id="GO:0003723">
    <property type="term" value="F:RNA binding"/>
    <property type="evidence" value="ECO:0007669"/>
    <property type="project" value="InterPro"/>
</dbReference>
<dbReference type="GO" id="GO:0004523">
    <property type="term" value="F:RNA-DNA hybrid ribonuclease activity"/>
    <property type="evidence" value="ECO:0007669"/>
    <property type="project" value="UniProtKB-UniRule"/>
</dbReference>
<dbReference type="GO" id="GO:0043137">
    <property type="term" value="P:DNA replication, removal of RNA primer"/>
    <property type="evidence" value="ECO:0007669"/>
    <property type="project" value="TreeGrafter"/>
</dbReference>
<dbReference type="GO" id="GO:0006298">
    <property type="term" value="P:mismatch repair"/>
    <property type="evidence" value="ECO:0007669"/>
    <property type="project" value="TreeGrafter"/>
</dbReference>
<dbReference type="CDD" id="cd07182">
    <property type="entry name" value="RNase_HII_bacteria_HII_like"/>
    <property type="match status" value="1"/>
</dbReference>
<dbReference type="FunFam" id="3.30.420.10:FF:000006">
    <property type="entry name" value="Ribonuclease HII"/>
    <property type="match status" value="1"/>
</dbReference>
<dbReference type="Gene3D" id="3.30.420.10">
    <property type="entry name" value="Ribonuclease H-like superfamily/Ribonuclease H"/>
    <property type="match status" value="1"/>
</dbReference>
<dbReference type="HAMAP" id="MF_00052_B">
    <property type="entry name" value="RNase_HII_B"/>
    <property type="match status" value="1"/>
</dbReference>
<dbReference type="InterPro" id="IPR022898">
    <property type="entry name" value="RNase_HII"/>
</dbReference>
<dbReference type="InterPro" id="IPR001352">
    <property type="entry name" value="RNase_HII/HIII"/>
</dbReference>
<dbReference type="InterPro" id="IPR024567">
    <property type="entry name" value="RNase_HII/HIII_dom"/>
</dbReference>
<dbReference type="InterPro" id="IPR012337">
    <property type="entry name" value="RNaseH-like_sf"/>
</dbReference>
<dbReference type="InterPro" id="IPR036397">
    <property type="entry name" value="RNaseH_sf"/>
</dbReference>
<dbReference type="NCBIfam" id="NF000594">
    <property type="entry name" value="PRK00015.1-1"/>
    <property type="match status" value="1"/>
</dbReference>
<dbReference type="NCBIfam" id="NF000595">
    <property type="entry name" value="PRK00015.1-3"/>
    <property type="match status" value="1"/>
</dbReference>
<dbReference type="PANTHER" id="PTHR10954">
    <property type="entry name" value="RIBONUCLEASE H2 SUBUNIT A"/>
    <property type="match status" value="1"/>
</dbReference>
<dbReference type="PANTHER" id="PTHR10954:SF18">
    <property type="entry name" value="RIBONUCLEASE HII"/>
    <property type="match status" value="1"/>
</dbReference>
<dbReference type="Pfam" id="PF01351">
    <property type="entry name" value="RNase_HII"/>
    <property type="match status" value="1"/>
</dbReference>
<dbReference type="SUPFAM" id="SSF53098">
    <property type="entry name" value="Ribonuclease H-like"/>
    <property type="match status" value="1"/>
</dbReference>
<dbReference type="PROSITE" id="PS51975">
    <property type="entry name" value="RNASE_H_2"/>
    <property type="match status" value="1"/>
</dbReference>
<gene>
    <name evidence="1" type="primary">rnhB</name>
    <name type="ordered locus">MGAS2096_Spy0957</name>
</gene>
<feature type="chain" id="PRO_1000031211" description="Ribonuclease HII">
    <location>
        <begin position="1"/>
        <end position="263"/>
    </location>
</feature>
<feature type="domain" description="RNase H type-2" evidence="2">
    <location>
        <begin position="71"/>
        <end position="262"/>
    </location>
</feature>
<feature type="binding site" evidence="1">
    <location>
        <position position="77"/>
    </location>
    <ligand>
        <name>a divalent metal cation</name>
        <dbReference type="ChEBI" id="CHEBI:60240"/>
    </ligand>
</feature>
<feature type="binding site" evidence="1">
    <location>
        <position position="78"/>
    </location>
    <ligand>
        <name>a divalent metal cation</name>
        <dbReference type="ChEBI" id="CHEBI:60240"/>
    </ligand>
</feature>
<feature type="binding site" evidence="1">
    <location>
        <position position="172"/>
    </location>
    <ligand>
        <name>a divalent metal cation</name>
        <dbReference type="ChEBI" id="CHEBI:60240"/>
    </ligand>
</feature>
<evidence type="ECO:0000255" key="1">
    <source>
        <dbReference type="HAMAP-Rule" id="MF_00052"/>
    </source>
</evidence>
<evidence type="ECO:0000255" key="2">
    <source>
        <dbReference type="PROSITE-ProRule" id="PRU01319"/>
    </source>
</evidence>